<dbReference type="EC" id="5.3.1.24" evidence="1"/>
<dbReference type="EMBL" id="CP000926">
    <property type="protein sequence ID" value="ABY97434.1"/>
    <property type="molecule type" value="Genomic_DNA"/>
</dbReference>
<dbReference type="RefSeq" id="WP_012271201.1">
    <property type="nucleotide sequence ID" value="NC_010322.1"/>
</dbReference>
<dbReference type="SMR" id="B0KF94"/>
<dbReference type="KEGG" id="ppg:PputGB1_1529"/>
<dbReference type="eggNOG" id="COG0135">
    <property type="taxonomic scope" value="Bacteria"/>
</dbReference>
<dbReference type="HOGENOM" id="CLU_076364_2_0_6"/>
<dbReference type="UniPathway" id="UPA00035">
    <property type="reaction ID" value="UER00042"/>
</dbReference>
<dbReference type="Proteomes" id="UP000002157">
    <property type="component" value="Chromosome"/>
</dbReference>
<dbReference type="GO" id="GO:0004640">
    <property type="term" value="F:phosphoribosylanthranilate isomerase activity"/>
    <property type="evidence" value="ECO:0007669"/>
    <property type="project" value="UniProtKB-UniRule"/>
</dbReference>
<dbReference type="GO" id="GO:0000162">
    <property type="term" value="P:L-tryptophan biosynthetic process"/>
    <property type="evidence" value="ECO:0007669"/>
    <property type="project" value="UniProtKB-UniRule"/>
</dbReference>
<dbReference type="CDD" id="cd00405">
    <property type="entry name" value="PRAI"/>
    <property type="match status" value="1"/>
</dbReference>
<dbReference type="FunFam" id="3.20.20.70:FF:000075">
    <property type="entry name" value="Tryptophan biosynthesis protein TRP1"/>
    <property type="match status" value="1"/>
</dbReference>
<dbReference type="Gene3D" id="3.20.20.70">
    <property type="entry name" value="Aldolase class I"/>
    <property type="match status" value="1"/>
</dbReference>
<dbReference type="HAMAP" id="MF_00135">
    <property type="entry name" value="PRAI"/>
    <property type="match status" value="1"/>
</dbReference>
<dbReference type="InterPro" id="IPR013785">
    <property type="entry name" value="Aldolase_TIM"/>
</dbReference>
<dbReference type="InterPro" id="IPR001240">
    <property type="entry name" value="PRAI_dom"/>
</dbReference>
<dbReference type="InterPro" id="IPR011060">
    <property type="entry name" value="RibuloseP-bd_barrel"/>
</dbReference>
<dbReference type="InterPro" id="IPR044643">
    <property type="entry name" value="TrpF_fam"/>
</dbReference>
<dbReference type="NCBIfam" id="NF002298">
    <property type="entry name" value="PRK01222.1-4"/>
    <property type="match status" value="1"/>
</dbReference>
<dbReference type="NCBIfam" id="NF002299">
    <property type="entry name" value="PRK01222.1-6"/>
    <property type="match status" value="1"/>
</dbReference>
<dbReference type="PANTHER" id="PTHR42894">
    <property type="entry name" value="N-(5'-PHOSPHORIBOSYL)ANTHRANILATE ISOMERASE"/>
    <property type="match status" value="1"/>
</dbReference>
<dbReference type="PANTHER" id="PTHR42894:SF1">
    <property type="entry name" value="N-(5'-PHOSPHORIBOSYL)ANTHRANILATE ISOMERASE"/>
    <property type="match status" value="1"/>
</dbReference>
<dbReference type="Pfam" id="PF00697">
    <property type="entry name" value="PRAI"/>
    <property type="match status" value="1"/>
</dbReference>
<dbReference type="SUPFAM" id="SSF51366">
    <property type="entry name" value="Ribulose-phoshate binding barrel"/>
    <property type="match status" value="1"/>
</dbReference>
<accession>B0KF94</accession>
<feature type="chain" id="PRO_1000076440" description="N-(5'-phosphoribosyl)anthranilate isomerase">
    <location>
        <begin position="1"/>
        <end position="206"/>
    </location>
</feature>
<organism>
    <name type="scientific">Pseudomonas putida (strain GB-1)</name>
    <dbReference type="NCBI Taxonomy" id="76869"/>
    <lineage>
        <taxon>Bacteria</taxon>
        <taxon>Pseudomonadati</taxon>
        <taxon>Pseudomonadota</taxon>
        <taxon>Gammaproteobacteria</taxon>
        <taxon>Pseudomonadales</taxon>
        <taxon>Pseudomonadaceae</taxon>
        <taxon>Pseudomonas</taxon>
    </lineage>
</organism>
<reference key="1">
    <citation type="submission" date="2008-01" db="EMBL/GenBank/DDBJ databases">
        <title>Complete sequence of Pseudomonas putida GB-1.</title>
        <authorList>
            <consortium name="US DOE Joint Genome Institute"/>
            <person name="Copeland A."/>
            <person name="Lucas S."/>
            <person name="Lapidus A."/>
            <person name="Barry K."/>
            <person name="Glavina del Rio T."/>
            <person name="Dalin E."/>
            <person name="Tice H."/>
            <person name="Pitluck S."/>
            <person name="Bruce D."/>
            <person name="Goodwin L."/>
            <person name="Chertkov O."/>
            <person name="Brettin T."/>
            <person name="Detter J.C."/>
            <person name="Han C."/>
            <person name="Kuske C.R."/>
            <person name="Schmutz J."/>
            <person name="Larimer F."/>
            <person name="Land M."/>
            <person name="Hauser L."/>
            <person name="Kyrpides N."/>
            <person name="Kim E."/>
            <person name="McCarthy J.K."/>
            <person name="Richardson P."/>
        </authorList>
    </citation>
    <scope>NUCLEOTIDE SEQUENCE [LARGE SCALE GENOMIC DNA]</scope>
    <source>
        <strain>GB-1</strain>
    </source>
</reference>
<name>TRPF_PSEPG</name>
<evidence type="ECO:0000255" key="1">
    <source>
        <dbReference type="HAMAP-Rule" id="MF_00135"/>
    </source>
</evidence>
<keyword id="KW-0028">Amino-acid biosynthesis</keyword>
<keyword id="KW-0057">Aromatic amino acid biosynthesis</keyword>
<keyword id="KW-0413">Isomerase</keyword>
<keyword id="KW-0822">Tryptophan biosynthesis</keyword>
<gene>
    <name evidence="1" type="primary">trpF</name>
    <name type="ordered locus">PputGB1_1529</name>
</gene>
<comment type="catalytic activity">
    <reaction evidence="1">
        <text>N-(5-phospho-beta-D-ribosyl)anthranilate = 1-(2-carboxyphenylamino)-1-deoxy-D-ribulose 5-phosphate</text>
        <dbReference type="Rhea" id="RHEA:21540"/>
        <dbReference type="ChEBI" id="CHEBI:18277"/>
        <dbReference type="ChEBI" id="CHEBI:58613"/>
        <dbReference type="EC" id="5.3.1.24"/>
    </reaction>
</comment>
<comment type="pathway">
    <text evidence="1">Amino-acid biosynthesis; L-tryptophan biosynthesis; L-tryptophan from chorismate: step 3/5.</text>
</comment>
<comment type="similarity">
    <text evidence="1">Belongs to the TrpF family.</text>
</comment>
<proteinExistence type="inferred from homology"/>
<protein>
    <recommendedName>
        <fullName evidence="1">N-(5'-phosphoribosyl)anthranilate isomerase</fullName>
        <shortName evidence="1">PRAI</shortName>
        <ecNumber evidence="1">5.3.1.24</ecNumber>
    </recommendedName>
</protein>
<sequence length="206" mass="21965">MSYVRSKICGITRIEDALAAAEAGADAIGFVFYAKSPRAVDVRQARAIITELPPFVTTVGLFVNASRCELNEILEVVPLDLLQFHGDETPQDCEGYHRPWIKALRVRPGDDLEAACKQYAGARGILLDTYVAGVPGGTGEAFDWSLVPAHLSKPIILAGGLSADNVGQAIAQVRPYAVDVSGGVEQAKGIKDAAKIEAFMRAVKQA</sequence>